<dbReference type="EMBL" id="CM004469">
    <property type="protein sequence ID" value="OCT91244.1"/>
    <property type="molecule type" value="Genomic_DNA"/>
</dbReference>
<dbReference type="STRING" id="8355.A0A1L8H579"/>
<dbReference type="PaxDb" id="8355-A0A1L8H579"/>
<dbReference type="OMA" id="EVYTREW"/>
<dbReference type="Proteomes" id="UP000186698">
    <property type="component" value="Unplaced"/>
</dbReference>
<dbReference type="Proteomes" id="UP000694892">
    <property type="component" value="Chromosome 2S"/>
</dbReference>
<dbReference type="GO" id="GO:0005929">
    <property type="term" value="C:cilium"/>
    <property type="evidence" value="ECO:0007669"/>
    <property type="project" value="UniProtKB-KW"/>
</dbReference>
<dbReference type="GO" id="GO:0005737">
    <property type="term" value="C:cytoplasm"/>
    <property type="evidence" value="ECO:0007669"/>
    <property type="project" value="UniProtKB-SubCell"/>
</dbReference>
<dbReference type="GO" id="GO:0005856">
    <property type="term" value="C:cytoskeleton"/>
    <property type="evidence" value="ECO:0007669"/>
    <property type="project" value="UniProtKB-KW"/>
</dbReference>
<dbReference type="GO" id="GO:0003352">
    <property type="term" value="P:regulation of cilium movement"/>
    <property type="evidence" value="ECO:0007669"/>
    <property type="project" value="InterPro"/>
</dbReference>
<dbReference type="InterPro" id="IPR021298">
    <property type="entry name" value="CFAP298"/>
</dbReference>
<dbReference type="PANTHER" id="PTHR13238:SF0">
    <property type="entry name" value="CILIA- AND FLAGELLA-ASSOCIATED PROTEIN 298"/>
    <property type="match status" value="1"/>
</dbReference>
<dbReference type="PANTHER" id="PTHR13238">
    <property type="entry name" value="PROTEIN C21ORF59"/>
    <property type="match status" value="1"/>
</dbReference>
<dbReference type="Pfam" id="PF11069">
    <property type="entry name" value="CFAP298"/>
    <property type="match status" value="1"/>
</dbReference>
<comment type="function">
    <text evidence="2 3">Plays a role in motile cilium function, possibly by acting on outer dynein arm assembly (PubMed:26904945). Seems to be important for initiation rather than maintenance of cilium motility (By similarity). Required for correct positioning of the cilium at the apical cell surface, suggesting an additional role in the planar cell polarity (PCP) pathway (PubMed:26904945). May suppress canonical Wnt signaling activity (PubMed:26904945).</text>
</comment>
<comment type="subcellular location">
    <subcellularLocation>
        <location evidence="3">Cytoplasm</location>
    </subcellularLocation>
    <subcellularLocation>
        <location evidence="3">Cytoplasm</location>
        <location evidence="3">Cytoskeleton</location>
        <location evidence="3">Cilium basal body</location>
    </subcellularLocation>
    <text evidence="1">Appears in cytoplasmic puncta, compatible with a centrosomal localization (By similarity).</text>
</comment>
<comment type="disruption phenotype">
    <text evidence="3">Morpholino knockdown of the protein results in loss of cilia-driven fluid flow along the anterior-posterior axis. Multiciliated cells show loss of coordinated cilium polarity with many cilia pointing towards the anterior instead of the posterior. The planar cell polarity (PCP) component prickle2 is uniformly distributed around the cell margin, instead of being asymmetrically localized to the posterior of the cell.</text>
</comment>
<comment type="similarity">
    <text evidence="5">Belongs to the CFAP298 family.</text>
</comment>
<keyword id="KW-0966">Cell projection</keyword>
<keyword id="KW-0969">Cilium</keyword>
<keyword id="KW-0963">Cytoplasm</keyword>
<keyword id="KW-0206">Cytoskeleton</keyword>
<keyword id="KW-1185">Reference proteome</keyword>
<name>C298B_XENLA</name>
<accession>A0A1L8H579</accession>
<organism evidence="6">
    <name type="scientific">Xenopus laevis</name>
    <name type="common">African clawed frog</name>
    <dbReference type="NCBI Taxonomy" id="8355"/>
    <lineage>
        <taxon>Eukaryota</taxon>
        <taxon>Metazoa</taxon>
        <taxon>Chordata</taxon>
        <taxon>Craniata</taxon>
        <taxon>Vertebrata</taxon>
        <taxon>Euteleostomi</taxon>
        <taxon>Amphibia</taxon>
        <taxon>Batrachia</taxon>
        <taxon>Anura</taxon>
        <taxon>Pipoidea</taxon>
        <taxon>Pipidae</taxon>
        <taxon>Xenopodinae</taxon>
        <taxon>Xenopus</taxon>
        <taxon>Xenopus</taxon>
    </lineage>
</organism>
<evidence type="ECO:0000250" key="1">
    <source>
        <dbReference type="UniProtKB" id="Q5U3Z0"/>
    </source>
</evidence>
<evidence type="ECO:0000250" key="2">
    <source>
        <dbReference type="UniProtKB" id="Q6DRC3"/>
    </source>
</evidence>
<evidence type="ECO:0000269" key="3">
    <source>
    </source>
</evidence>
<evidence type="ECO:0000303" key="4">
    <source>
    </source>
</evidence>
<evidence type="ECO:0000305" key="5"/>
<evidence type="ECO:0000312" key="6">
    <source>
        <dbReference type="Proteomes" id="UP000186698"/>
    </source>
</evidence>
<reference evidence="6" key="1">
    <citation type="journal article" date="2016" name="Nature">
        <title>Genome evolution in the allotetraploid frog Xenopus laevis.</title>
        <authorList>
            <person name="Session A.M."/>
            <person name="Uno Y."/>
            <person name="Kwon T."/>
            <person name="Chapman J.A."/>
            <person name="Toyoda A."/>
            <person name="Takahashi S."/>
            <person name="Fukui A."/>
            <person name="Hikosaka A."/>
            <person name="Suzuki A."/>
            <person name="Kondo M."/>
            <person name="van Heeringen S.J."/>
            <person name="Quigley I."/>
            <person name="Heinz S."/>
            <person name="Ogino H."/>
            <person name="Ochi H."/>
            <person name="Hellsten U."/>
            <person name="Lyons J.B."/>
            <person name="Simakov O."/>
            <person name="Putnam N."/>
            <person name="Stites J."/>
            <person name="Kuroki Y."/>
            <person name="Tanaka T."/>
            <person name="Michiue T."/>
            <person name="Watanabe M."/>
            <person name="Bogdanovic O."/>
            <person name="Lister R."/>
            <person name="Georgiou G."/>
            <person name="Paranjpe S.S."/>
            <person name="van Kruijsbergen I."/>
            <person name="Shu S."/>
            <person name="Carlson J."/>
            <person name="Kinoshita T."/>
            <person name="Ohta Y."/>
            <person name="Mawaribuchi S."/>
            <person name="Jenkins J."/>
            <person name="Grimwood J."/>
            <person name="Schmutz J."/>
            <person name="Mitros T."/>
            <person name="Mozaffari S.V."/>
            <person name="Suzuki Y."/>
            <person name="Haramoto Y."/>
            <person name="Yamamoto T.S."/>
            <person name="Takagi C."/>
            <person name="Heald R."/>
            <person name="Miller K."/>
            <person name="Haudenschild C."/>
            <person name="Kitzman J."/>
            <person name="Nakayama T."/>
            <person name="Izutsu Y."/>
            <person name="Robert J."/>
            <person name="Fortriede J."/>
            <person name="Burns K."/>
            <person name="Lotay V."/>
            <person name="Karimi K."/>
            <person name="Yasuoka Y."/>
            <person name="Dichmann D.S."/>
            <person name="Flajnik M.F."/>
            <person name="Houston D.W."/>
            <person name="Shendure J."/>
            <person name="DuPasquier L."/>
            <person name="Vize P.D."/>
            <person name="Zorn A.M."/>
            <person name="Ito M."/>
            <person name="Marcotte E.M."/>
            <person name="Wallingford J.B."/>
            <person name="Ito Y."/>
            <person name="Asashima M."/>
            <person name="Ueno N."/>
            <person name="Matsuda Y."/>
            <person name="Veenstra G.J."/>
            <person name="Fujiyama A."/>
            <person name="Harland R.M."/>
            <person name="Taira M."/>
            <person name="Rokhsar D.S."/>
        </authorList>
    </citation>
    <scope>NUCLEOTIDE SEQUENCE [LARGE SCALE GENOMIC DNA]</scope>
    <source>
        <strain evidence="6">J</strain>
    </source>
</reference>
<reference evidence="5" key="2">
    <citation type="journal article" date="2016" name="Cell Rep.">
        <title>c21orf59/kurly controls both cilia motility and polarization.</title>
        <authorList>
            <person name="Jaffe K.M."/>
            <person name="Grimes D.T."/>
            <person name="Schottenfeld-Roames J."/>
            <person name="Werner M.E."/>
            <person name="Ku T.S."/>
            <person name="Kim S.K."/>
            <person name="Pelliccia J.L."/>
            <person name="Morante N.F."/>
            <person name="Mitchell B.J."/>
            <person name="Burdine R.D."/>
        </authorList>
    </citation>
    <scope>FUNCTION</scope>
    <scope>SUBCELLULAR LOCATION</scope>
    <scope>DISRUPTION PHENOTYPE</scope>
</reference>
<gene>
    <name type="primary">cfap298-b</name>
    <name evidence="4" type="synonym">kur-b</name>
</gene>
<feature type="chain" id="PRO_0000441860" description="Cilia- and flagella-associated protein 298-B">
    <location>
        <begin position="1"/>
        <end position="273"/>
    </location>
</feature>
<sequence>MVRLHIKRGDESQFLFDTSVIVPVEALVKQITAIYNGILKIDRICSEMAELAEHDLKLKDEWEERCVPSGGSVFKKDEIGRRNGHAPNDSMKKVLQKTMEEAKALISKKQAEANVCVTLEMVKEATDQLRGAVMIVYPMGLPPHDPIRMEFENNEDLSGTHAGQLVIQEPESQLWWAGKELQRKQKLSDYVGKNEKTKIIVKIQKRGQGAPGREPVISQEEQKNLMMHYYRRQEELKKLEVDEDISYLNAEWADSNSLKRQFQGVNDIKWKPR</sequence>
<proteinExistence type="inferred from homology"/>
<protein>
    <recommendedName>
        <fullName evidence="5">Cilia- and flagella-associated protein 298-B</fullName>
    </recommendedName>
    <alternativeName>
        <fullName evidence="5">Protein kurly-B</fullName>
    </alternativeName>
</protein>